<accession>Q5LMG5</accession>
<proteinExistence type="inferred from homology"/>
<comment type="function">
    <text evidence="1">Binds directly to 23S ribosomal RNA and is necessary for the in vitro assembly process of the 50S ribosomal subunit. It is not involved in the protein synthesizing functions of that subunit.</text>
</comment>
<comment type="similarity">
    <text evidence="1">Belongs to the bacterial ribosomal protein bL20 family.</text>
</comment>
<gene>
    <name evidence="1" type="primary">rplT</name>
    <name type="ordered locus">SPO3598</name>
</gene>
<evidence type="ECO:0000255" key="1">
    <source>
        <dbReference type="HAMAP-Rule" id="MF_00382"/>
    </source>
</evidence>
<evidence type="ECO:0000305" key="2"/>
<name>RL20_RUEPO</name>
<feature type="chain" id="PRO_0000243737" description="Large ribosomal subunit protein bL20">
    <location>
        <begin position="1"/>
        <end position="121"/>
    </location>
</feature>
<organism>
    <name type="scientific">Ruegeria pomeroyi (strain ATCC 700808 / DSM 15171 / DSS-3)</name>
    <name type="common">Silicibacter pomeroyi</name>
    <dbReference type="NCBI Taxonomy" id="246200"/>
    <lineage>
        <taxon>Bacteria</taxon>
        <taxon>Pseudomonadati</taxon>
        <taxon>Pseudomonadota</taxon>
        <taxon>Alphaproteobacteria</taxon>
        <taxon>Rhodobacterales</taxon>
        <taxon>Roseobacteraceae</taxon>
        <taxon>Ruegeria</taxon>
    </lineage>
</organism>
<sequence length="121" mass="13403">MSRVKGGTVTHARHKKVLKAAKGYYGRRKSSFKVATQAVDKANQYATRDRKARKRNFRALWIQRINAAVRSHDEALTYSRFINGLNLAGIEVDRKVLADLAVHEPEAFGAIVAQAQAALAA</sequence>
<reference key="1">
    <citation type="journal article" date="2004" name="Nature">
        <title>Genome sequence of Silicibacter pomeroyi reveals adaptations to the marine environment.</title>
        <authorList>
            <person name="Moran M.A."/>
            <person name="Buchan A."/>
            <person name="Gonzalez J.M."/>
            <person name="Heidelberg J.F."/>
            <person name="Whitman W.B."/>
            <person name="Kiene R.P."/>
            <person name="Henriksen J.R."/>
            <person name="King G.M."/>
            <person name="Belas R."/>
            <person name="Fuqua C."/>
            <person name="Brinkac L.M."/>
            <person name="Lewis M."/>
            <person name="Johri S."/>
            <person name="Weaver B."/>
            <person name="Pai G."/>
            <person name="Eisen J.A."/>
            <person name="Rahe E."/>
            <person name="Sheldon W.M."/>
            <person name="Ye W."/>
            <person name="Miller T.R."/>
            <person name="Carlton J."/>
            <person name="Rasko D.A."/>
            <person name="Paulsen I.T."/>
            <person name="Ren Q."/>
            <person name="Daugherty S.C."/>
            <person name="DeBoy R.T."/>
            <person name="Dodson R.J."/>
            <person name="Durkin A.S."/>
            <person name="Madupu R."/>
            <person name="Nelson W.C."/>
            <person name="Sullivan S.A."/>
            <person name="Rosovitz M.J."/>
            <person name="Haft D.H."/>
            <person name="Selengut J."/>
            <person name="Ward N."/>
        </authorList>
    </citation>
    <scope>NUCLEOTIDE SEQUENCE [LARGE SCALE GENOMIC DNA]</scope>
    <source>
        <strain>ATCC 700808 / DSM 15171 / DSS-3</strain>
    </source>
</reference>
<reference key="2">
    <citation type="journal article" date="2014" name="Stand. Genomic Sci.">
        <title>An updated genome annotation for the model marine bacterium Ruegeria pomeroyi DSS-3.</title>
        <authorList>
            <person name="Rivers A.R."/>
            <person name="Smith C.B."/>
            <person name="Moran M.A."/>
        </authorList>
    </citation>
    <scope>GENOME REANNOTATION</scope>
    <source>
        <strain>ATCC 700808 / DSM 15171 / DSS-3</strain>
    </source>
</reference>
<keyword id="KW-1185">Reference proteome</keyword>
<keyword id="KW-0687">Ribonucleoprotein</keyword>
<keyword id="KW-0689">Ribosomal protein</keyword>
<keyword id="KW-0694">RNA-binding</keyword>
<keyword id="KW-0699">rRNA-binding</keyword>
<dbReference type="EMBL" id="CP000031">
    <property type="protein sequence ID" value="AAV96823.1"/>
    <property type="molecule type" value="Genomic_DNA"/>
</dbReference>
<dbReference type="RefSeq" id="WP_011049278.1">
    <property type="nucleotide sequence ID" value="NC_003911.12"/>
</dbReference>
<dbReference type="SMR" id="Q5LMG5"/>
<dbReference type="STRING" id="246200.SPO3598"/>
<dbReference type="PaxDb" id="246200-SPO3598"/>
<dbReference type="KEGG" id="sil:SPO3598"/>
<dbReference type="eggNOG" id="COG0292">
    <property type="taxonomic scope" value="Bacteria"/>
</dbReference>
<dbReference type="HOGENOM" id="CLU_123265_0_1_5"/>
<dbReference type="OrthoDB" id="9808966at2"/>
<dbReference type="Proteomes" id="UP000001023">
    <property type="component" value="Chromosome"/>
</dbReference>
<dbReference type="GO" id="GO:1990904">
    <property type="term" value="C:ribonucleoprotein complex"/>
    <property type="evidence" value="ECO:0007669"/>
    <property type="project" value="UniProtKB-KW"/>
</dbReference>
<dbReference type="GO" id="GO:0005840">
    <property type="term" value="C:ribosome"/>
    <property type="evidence" value="ECO:0007669"/>
    <property type="project" value="UniProtKB-KW"/>
</dbReference>
<dbReference type="GO" id="GO:0019843">
    <property type="term" value="F:rRNA binding"/>
    <property type="evidence" value="ECO:0007669"/>
    <property type="project" value="UniProtKB-UniRule"/>
</dbReference>
<dbReference type="GO" id="GO:0003735">
    <property type="term" value="F:structural constituent of ribosome"/>
    <property type="evidence" value="ECO:0007669"/>
    <property type="project" value="InterPro"/>
</dbReference>
<dbReference type="GO" id="GO:0000027">
    <property type="term" value="P:ribosomal large subunit assembly"/>
    <property type="evidence" value="ECO:0007669"/>
    <property type="project" value="UniProtKB-UniRule"/>
</dbReference>
<dbReference type="GO" id="GO:0006412">
    <property type="term" value="P:translation"/>
    <property type="evidence" value="ECO:0007669"/>
    <property type="project" value="InterPro"/>
</dbReference>
<dbReference type="CDD" id="cd07026">
    <property type="entry name" value="Ribosomal_L20"/>
    <property type="match status" value="1"/>
</dbReference>
<dbReference type="FunFam" id="1.10.1900.20:FF:000001">
    <property type="entry name" value="50S ribosomal protein L20"/>
    <property type="match status" value="1"/>
</dbReference>
<dbReference type="Gene3D" id="6.10.160.10">
    <property type="match status" value="1"/>
</dbReference>
<dbReference type="Gene3D" id="1.10.1900.20">
    <property type="entry name" value="Ribosomal protein L20"/>
    <property type="match status" value="1"/>
</dbReference>
<dbReference type="HAMAP" id="MF_00382">
    <property type="entry name" value="Ribosomal_bL20"/>
    <property type="match status" value="1"/>
</dbReference>
<dbReference type="InterPro" id="IPR005813">
    <property type="entry name" value="Ribosomal_bL20"/>
</dbReference>
<dbReference type="InterPro" id="IPR049946">
    <property type="entry name" value="RIBOSOMAL_L20_CS"/>
</dbReference>
<dbReference type="InterPro" id="IPR035566">
    <property type="entry name" value="Ribosomal_protein_bL20_C"/>
</dbReference>
<dbReference type="NCBIfam" id="TIGR01032">
    <property type="entry name" value="rplT_bact"/>
    <property type="match status" value="1"/>
</dbReference>
<dbReference type="PANTHER" id="PTHR10986">
    <property type="entry name" value="39S RIBOSOMAL PROTEIN L20"/>
    <property type="match status" value="1"/>
</dbReference>
<dbReference type="Pfam" id="PF00453">
    <property type="entry name" value="Ribosomal_L20"/>
    <property type="match status" value="1"/>
</dbReference>
<dbReference type="PRINTS" id="PR00062">
    <property type="entry name" value="RIBOSOMALL20"/>
</dbReference>
<dbReference type="SUPFAM" id="SSF74731">
    <property type="entry name" value="Ribosomal protein L20"/>
    <property type="match status" value="1"/>
</dbReference>
<dbReference type="PROSITE" id="PS00937">
    <property type="entry name" value="RIBOSOMAL_L20"/>
    <property type="match status" value="1"/>
</dbReference>
<protein>
    <recommendedName>
        <fullName evidence="1">Large ribosomal subunit protein bL20</fullName>
    </recommendedName>
    <alternativeName>
        <fullName evidence="2">50S ribosomal protein L20</fullName>
    </alternativeName>
</protein>